<evidence type="ECO:0000255" key="1">
    <source>
        <dbReference type="HAMAP-Rule" id="MF_00303"/>
    </source>
</evidence>
<evidence type="ECO:0000256" key="2">
    <source>
        <dbReference type="SAM" id="MobiDB-lite"/>
    </source>
</evidence>
<gene>
    <name evidence="1" type="primary">tig</name>
    <name type="ordered locus">JTY_2476</name>
</gene>
<dbReference type="EC" id="5.2.1.8" evidence="1"/>
<dbReference type="EMBL" id="AP010918">
    <property type="protein sequence ID" value="BAH26758.1"/>
    <property type="molecule type" value="Genomic_DNA"/>
</dbReference>
<dbReference type="RefSeq" id="WP_003412652.1">
    <property type="nucleotide sequence ID" value="NZ_CP014566.1"/>
</dbReference>
<dbReference type="SMR" id="C1AES9"/>
<dbReference type="GeneID" id="45426452"/>
<dbReference type="KEGG" id="mbt:JTY_2476"/>
<dbReference type="HOGENOM" id="CLU_033058_3_0_11"/>
<dbReference type="GO" id="GO:0005737">
    <property type="term" value="C:cytoplasm"/>
    <property type="evidence" value="ECO:0007669"/>
    <property type="project" value="UniProtKB-SubCell"/>
</dbReference>
<dbReference type="GO" id="GO:0003755">
    <property type="term" value="F:peptidyl-prolyl cis-trans isomerase activity"/>
    <property type="evidence" value="ECO:0007669"/>
    <property type="project" value="UniProtKB-UniRule"/>
</dbReference>
<dbReference type="GO" id="GO:0044183">
    <property type="term" value="F:protein folding chaperone"/>
    <property type="evidence" value="ECO:0007669"/>
    <property type="project" value="TreeGrafter"/>
</dbReference>
<dbReference type="GO" id="GO:0043022">
    <property type="term" value="F:ribosome binding"/>
    <property type="evidence" value="ECO:0007669"/>
    <property type="project" value="TreeGrafter"/>
</dbReference>
<dbReference type="GO" id="GO:0051083">
    <property type="term" value="P:'de novo' cotranslational protein folding"/>
    <property type="evidence" value="ECO:0007669"/>
    <property type="project" value="TreeGrafter"/>
</dbReference>
<dbReference type="GO" id="GO:0051301">
    <property type="term" value="P:cell division"/>
    <property type="evidence" value="ECO:0007669"/>
    <property type="project" value="UniProtKB-KW"/>
</dbReference>
<dbReference type="GO" id="GO:0061077">
    <property type="term" value="P:chaperone-mediated protein folding"/>
    <property type="evidence" value="ECO:0007669"/>
    <property type="project" value="TreeGrafter"/>
</dbReference>
<dbReference type="GO" id="GO:0015031">
    <property type="term" value="P:protein transport"/>
    <property type="evidence" value="ECO:0007669"/>
    <property type="project" value="UniProtKB-UniRule"/>
</dbReference>
<dbReference type="GO" id="GO:0043335">
    <property type="term" value="P:protein unfolding"/>
    <property type="evidence" value="ECO:0007669"/>
    <property type="project" value="TreeGrafter"/>
</dbReference>
<dbReference type="FunFam" id="3.10.50.40:FF:000019">
    <property type="entry name" value="Trigger factor"/>
    <property type="match status" value="1"/>
</dbReference>
<dbReference type="FunFam" id="3.30.70.1050:FF:000003">
    <property type="entry name" value="Trigger factor"/>
    <property type="match status" value="1"/>
</dbReference>
<dbReference type="Gene3D" id="3.10.50.40">
    <property type="match status" value="1"/>
</dbReference>
<dbReference type="Gene3D" id="3.30.70.1050">
    <property type="entry name" value="Trigger factor ribosome-binding domain"/>
    <property type="match status" value="1"/>
</dbReference>
<dbReference type="Gene3D" id="1.10.3120.10">
    <property type="entry name" value="Trigger factor, C-terminal domain"/>
    <property type="match status" value="1"/>
</dbReference>
<dbReference type="HAMAP" id="MF_00303">
    <property type="entry name" value="Trigger_factor_Tig"/>
    <property type="match status" value="1"/>
</dbReference>
<dbReference type="InterPro" id="IPR046357">
    <property type="entry name" value="PPIase_dom_sf"/>
</dbReference>
<dbReference type="InterPro" id="IPR001179">
    <property type="entry name" value="PPIase_FKBP_dom"/>
</dbReference>
<dbReference type="InterPro" id="IPR005215">
    <property type="entry name" value="Trig_fac"/>
</dbReference>
<dbReference type="InterPro" id="IPR008880">
    <property type="entry name" value="Trigger_fac_C"/>
</dbReference>
<dbReference type="InterPro" id="IPR037041">
    <property type="entry name" value="Trigger_fac_C_sf"/>
</dbReference>
<dbReference type="InterPro" id="IPR008881">
    <property type="entry name" value="Trigger_fac_ribosome-bd_bac"/>
</dbReference>
<dbReference type="InterPro" id="IPR036611">
    <property type="entry name" value="Trigger_fac_ribosome-bd_sf"/>
</dbReference>
<dbReference type="InterPro" id="IPR027304">
    <property type="entry name" value="Trigger_fact/SurA_dom_sf"/>
</dbReference>
<dbReference type="NCBIfam" id="TIGR00115">
    <property type="entry name" value="tig"/>
    <property type="match status" value="1"/>
</dbReference>
<dbReference type="PANTHER" id="PTHR30560">
    <property type="entry name" value="TRIGGER FACTOR CHAPERONE AND PEPTIDYL-PROLYL CIS/TRANS ISOMERASE"/>
    <property type="match status" value="1"/>
</dbReference>
<dbReference type="PANTHER" id="PTHR30560:SF3">
    <property type="entry name" value="TRIGGER FACTOR-LIKE PROTEIN TIG, CHLOROPLASTIC"/>
    <property type="match status" value="1"/>
</dbReference>
<dbReference type="Pfam" id="PF00254">
    <property type="entry name" value="FKBP_C"/>
    <property type="match status" value="1"/>
</dbReference>
<dbReference type="Pfam" id="PF05698">
    <property type="entry name" value="Trigger_C"/>
    <property type="match status" value="1"/>
</dbReference>
<dbReference type="Pfam" id="PF05697">
    <property type="entry name" value="Trigger_N"/>
    <property type="match status" value="1"/>
</dbReference>
<dbReference type="PIRSF" id="PIRSF003095">
    <property type="entry name" value="Trigger_factor"/>
    <property type="match status" value="1"/>
</dbReference>
<dbReference type="SUPFAM" id="SSF54534">
    <property type="entry name" value="FKBP-like"/>
    <property type="match status" value="1"/>
</dbReference>
<dbReference type="SUPFAM" id="SSF109998">
    <property type="entry name" value="Triger factor/SurA peptide-binding domain-like"/>
    <property type="match status" value="1"/>
</dbReference>
<dbReference type="SUPFAM" id="SSF102735">
    <property type="entry name" value="Trigger factor ribosome-binding domain"/>
    <property type="match status" value="1"/>
</dbReference>
<proteinExistence type="inferred from homology"/>
<protein>
    <recommendedName>
        <fullName evidence="1">Trigger factor</fullName>
        <shortName evidence="1">TF</shortName>
        <ecNumber evidence="1">5.2.1.8</ecNumber>
    </recommendedName>
    <alternativeName>
        <fullName evidence="1">PPIase</fullName>
    </alternativeName>
</protein>
<name>TIG_MYCBT</name>
<accession>C1AES9</accession>
<feature type="chain" id="PRO_1000198168" description="Trigger factor">
    <location>
        <begin position="1"/>
        <end position="466"/>
    </location>
</feature>
<feature type="domain" description="PPIase FKBP-type" evidence="1">
    <location>
        <begin position="162"/>
        <end position="243"/>
    </location>
</feature>
<feature type="region of interest" description="Disordered" evidence="2">
    <location>
        <begin position="428"/>
        <end position="466"/>
    </location>
</feature>
<feature type="compositionally biased region" description="Low complexity" evidence="2">
    <location>
        <begin position="457"/>
        <end position="466"/>
    </location>
</feature>
<organism>
    <name type="scientific">Mycobacterium bovis (strain BCG / Tokyo 172 / ATCC 35737 / TMC 1019)</name>
    <dbReference type="NCBI Taxonomy" id="561275"/>
    <lineage>
        <taxon>Bacteria</taxon>
        <taxon>Bacillati</taxon>
        <taxon>Actinomycetota</taxon>
        <taxon>Actinomycetes</taxon>
        <taxon>Mycobacteriales</taxon>
        <taxon>Mycobacteriaceae</taxon>
        <taxon>Mycobacterium</taxon>
        <taxon>Mycobacterium tuberculosis complex</taxon>
    </lineage>
</organism>
<keyword id="KW-0131">Cell cycle</keyword>
<keyword id="KW-0132">Cell division</keyword>
<keyword id="KW-0143">Chaperone</keyword>
<keyword id="KW-0963">Cytoplasm</keyword>
<keyword id="KW-0413">Isomerase</keyword>
<keyword id="KW-0697">Rotamase</keyword>
<sequence length="466" mass="50632">MKSTVEQLSPTRVRINVEVPFAELEPDFQRAYKELAKQVRLPGFRPGKAPAKLLEARIGREAMLDQIVNDALPSRYGQAVAESDVQPLGRPNIEVTKKEYGQDLQFTAEVDIRPKISLPDLSALTVSVDPIEIGEDDVDAELQSLRTRFGTLTAVDRPVAVGDVVSIDLSATVDGEDIPNAAAEGLSHEVGSGRLIAGLDDAVVGLSADESRVFTAKLAAGEHAGQEAQVTVTVRSVKERELPEPDDEFAQLASEFDSIDELRASLSDQVRQAKRAQQAEQIRNATIDALLEQVDVPLPESYVQAQFDSVLHSALSGLNHDEARFNELLVEQGSSRAAFDAEARTASEKDVKRQLLLDALADELQVQVGQDDLTERLVTTSRQYGIEPQQLFGYLQERNQLPTMFADVRRELAIRAAVEAATVTDSDGNTIDTSEFFGKRVSAGEAEEAEPADEGAARAASDEATT</sequence>
<comment type="function">
    <text evidence="1">Involved in protein export. Acts as a chaperone by maintaining the newly synthesized protein in an open conformation. Functions as a peptidyl-prolyl cis-trans isomerase.</text>
</comment>
<comment type="catalytic activity">
    <reaction evidence="1">
        <text>[protein]-peptidylproline (omega=180) = [protein]-peptidylproline (omega=0)</text>
        <dbReference type="Rhea" id="RHEA:16237"/>
        <dbReference type="Rhea" id="RHEA-COMP:10747"/>
        <dbReference type="Rhea" id="RHEA-COMP:10748"/>
        <dbReference type="ChEBI" id="CHEBI:83833"/>
        <dbReference type="ChEBI" id="CHEBI:83834"/>
        <dbReference type="EC" id="5.2.1.8"/>
    </reaction>
</comment>
<comment type="subcellular location">
    <subcellularLocation>
        <location>Cytoplasm</location>
    </subcellularLocation>
    <text evidence="1">About half TF is bound to the ribosome near the polypeptide exit tunnel while the other half is free in the cytoplasm.</text>
</comment>
<comment type="domain">
    <text evidence="1">Consists of 3 domains; the N-terminus binds the ribosome, the middle domain has PPIase activity, while the C-terminus has intrinsic chaperone activity on its own.</text>
</comment>
<comment type="similarity">
    <text evidence="1">Belongs to the FKBP-type PPIase family. Tig subfamily.</text>
</comment>
<reference key="1">
    <citation type="journal article" date="2009" name="Vaccine">
        <title>Whole genome sequence analysis of Mycobacterium bovis bacillus Calmette-Guerin (BCG) Tokyo 172: a comparative study of BCG vaccine substrains.</title>
        <authorList>
            <person name="Seki M."/>
            <person name="Honda I."/>
            <person name="Fujita I."/>
            <person name="Yano I."/>
            <person name="Yamamoto S."/>
            <person name="Koyama A."/>
        </authorList>
    </citation>
    <scope>NUCLEOTIDE SEQUENCE [LARGE SCALE GENOMIC DNA]</scope>
    <source>
        <strain>BCG / Tokyo 172 / ATCC 35737 / TMC 1019</strain>
    </source>
</reference>